<dbReference type="EMBL" id="CU928163">
    <property type="protein sequence ID" value="CAR12365.1"/>
    <property type="molecule type" value="Genomic_DNA"/>
</dbReference>
<dbReference type="RefSeq" id="WP_001295356.1">
    <property type="nucleotide sequence ID" value="NC_011751.1"/>
</dbReference>
<dbReference type="RefSeq" id="YP_002411909.1">
    <property type="nucleotide sequence ID" value="NC_011751.1"/>
</dbReference>
<dbReference type="SMR" id="B7N3C9"/>
<dbReference type="STRING" id="585056.ECUMN_1156"/>
<dbReference type="GeneID" id="93776448"/>
<dbReference type="KEGG" id="eum:ECUMN_1156"/>
<dbReference type="PATRIC" id="fig|585056.7.peg.1352"/>
<dbReference type="HOGENOM" id="CLU_123865_1_0_6"/>
<dbReference type="Proteomes" id="UP000007097">
    <property type="component" value="Chromosome"/>
</dbReference>
<dbReference type="GO" id="GO:0005737">
    <property type="term" value="C:cytoplasm"/>
    <property type="evidence" value="ECO:0007669"/>
    <property type="project" value="UniProtKB-SubCell"/>
</dbReference>
<dbReference type="GO" id="GO:0003677">
    <property type="term" value="F:DNA binding"/>
    <property type="evidence" value="ECO:0007669"/>
    <property type="project" value="InterPro"/>
</dbReference>
<dbReference type="GO" id="GO:0009408">
    <property type="term" value="P:response to heat"/>
    <property type="evidence" value="ECO:0007669"/>
    <property type="project" value="UniProtKB-UniRule"/>
</dbReference>
<dbReference type="Gene3D" id="2.30.30.390">
    <property type="entry name" value="Hemimethylated DNA-binding domain"/>
    <property type="match status" value="1"/>
</dbReference>
<dbReference type="HAMAP" id="MF_01194">
    <property type="entry name" value="HspQ"/>
    <property type="match status" value="1"/>
</dbReference>
<dbReference type="InterPro" id="IPR011722">
    <property type="entry name" value="Hemimethylated_DNA-bd_dom"/>
</dbReference>
<dbReference type="InterPro" id="IPR036623">
    <property type="entry name" value="Hemimethylated_DNA-bd_sf"/>
</dbReference>
<dbReference type="InterPro" id="IPR022866">
    <property type="entry name" value="HspQ"/>
</dbReference>
<dbReference type="NCBIfam" id="NF010729">
    <property type="entry name" value="PRK14129.1"/>
    <property type="match status" value="1"/>
</dbReference>
<dbReference type="NCBIfam" id="TIGR02097">
    <property type="entry name" value="yccV"/>
    <property type="match status" value="1"/>
</dbReference>
<dbReference type="Pfam" id="PF08755">
    <property type="entry name" value="YccV-like"/>
    <property type="match status" value="1"/>
</dbReference>
<dbReference type="SMART" id="SM00992">
    <property type="entry name" value="YccV-like"/>
    <property type="match status" value="1"/>
</dbReference>
<dbReference type="SUPFAM" id="SSF141255">
    <property type="entry name" value="YccV-like"/>
    <property type="match status" value="1"/>
</dbReference>
<name>HSPQ_ECOLU</name>
<proteinExistence type="inferred from homology"/>
<organism>
    <name type="scientific">Escherichia coli O17:K52:H18 (strain UMN026 / ExPEC)</name>
    <dbReference type="NCBI Taxonomy" id="585056"/>
    <lineage>
        <taxon>Bacteria</taxon>
        <taxon>Pseudomonadati</taxon>
        <taxon>Pseudomonadota</taxon>
        <taxon>Gammaproteobacteria</taxon>
        <taxon>Enterobacterales</taxon>
        <taxon>Enterobacteriaceae</taxon>
        <taxon>Escherichia</taxon>
    </lineage>
</organism>
<feature type="chain" id="PRO_1000138408" description="Heat shock protein HspQ">
    <location>
        <begin position="1"/>
        <end position="105"/>
    </location>
</feature>
<feature type="region of interest" description="Disordered" evidence="2">
    <location>
        <begin position="75"/>
        <end position="105"/>
    </location>
</feature>
<protein>
    <recommendedName>
        <fullName evidence="1">Heat shock protein HspQ</fullName>
    </recommendedName>
</protein>
<keyword id="KW-0963">Cytoplasm</keyword>
<keyword id="KW-0346">Stress response</keyword>
<comment type="function">
    <text evidence="1">Involved in the degradation of certain denaturated proteins, including DnaA, during heat shock stress.</text>
</comment>
<comment type="subcellular location">
    <subcellularLocation>
        <location evidence="1">Cytoplasm</location>
    </subcellularLocation>
</comment>
<comment type="similarity">
    <text evidence="1">Belongs to the HspQ family.</text>
</comment>
<gene>
    <name evidence="1" type="primary">hspQ</name>
    <name type="ordered locus">ECUMN_1156</name>
</gene>
<accession>B7N3C9</accession>
<reference key="1">
    <citation type="journal article" date="2009" name="PLoS Genet.">
        <title>Organised genome dynamics in the Escherichia coli species results in highly diverse adaptive paths.</title>
        <authorList>
            <person name="Touchon M."/>
            <person name="Hoede C."/>
            <person name="Tenaillon O."/>
            <person name="Barbe V."/>
            <person name="Baeriswyl S."/>
            <person name="Bidet P."/>
            <person name="Bingen E."/>
            <person name="Bonacorsi S."/>
            <person name="Bouchier C."/>
            <person name="Bouvet O."/>
            <person name="Calteau A."/>
            <person name="Chiapello H."/>
            <person name="Clermont O."/>
            <person name="Cruveiller S."/>
            <person name="Danchin A."/>
            <person name="Diard M."/>
            <person name="Dossat C."/>
            <person name="Karoui M.E."/>
            <person name="Frapy E."/>
            <person name="Garry L."/>
            <person name="Ghigo J.M."/>
            <person name="Gilles A.M."/>
            <person name="Johnson J."/>
            <person name="Le Bouguenec C."/>
            <person name="Lescat M."/>
            <person name="Mangenot S."/>
            <person name="Martinez-Jehanne V."/>
            <person name="Matic I."/>
            <person name="Nassif X."/>
            <person name="Oztas S."/>
            <person name="Petit M.A."/>
            <person name="Pichon C."/>
            <person name="Rouy Z."/>
            <person name="Ruf C.S."/>
            <person name="Schneider D."/>
            <person name="Tourret J."/>
            <person name="Vacherie B."/>
            <person name="Vallenet D."/>
            <person name="Medigue C."/>
            <person name="Rocha E.P.C."/>
            <person name="Denamur E."/>
        </authorList>
    </citation>
    <scope>NUCLEOTIDE SEQUENCE [LARGE SCALE GENOMIC DNA]</scope>
    <source>
        <strain>UMN026 / ExPEC</strain>
    </source>
</reference>
<sequence>MIASKFGIGQQVRHSLLGYLGVVVDIDPVYSLSEPSPDELAVNDELRAAPWYHVVMEDDNGLPVHTYLAEAQLSSELQDEHPEQPSMDELAQTIRKQLQAPRLRN</sequence>
<evidence type="ECO:0000255" key="1">
    <source>
        <dbReference type="HAMAP-Rule" id="MF_01194"/>
    </source>
</evidence>
<evidence type="ECO:0000256" key="2">
    <source>
        <dbReference type="SAM" id="MobiDB-lite"/>
    </source>
</evidence>